<protein>
    <recommendedName>
        <fullName evidence="1">Large ribosomal subunit protein bL34</fullName>
    </recommendedName>
    <alternativeName>
        <fullName evidence="2">50S ribosomal protein L34</fullName>
    </alternativeName>
</protein>
<organism>
    <name type="scientific">Escherichia coli (strain ATCC 8739 / DSM 1576 / NBRC 3972 / NCIMB 8545 / WDCM 00012 / Crooks)</name>
    <dbReference type="NCBI Taxonomy" id="481805"/>
    <lineage>
        <taxon>Bacteria</taxon>
        <taxon>Pseudomonadati</taxon>
        <taxon>Pseudomonadota</taxon>
        <taxon>Gammaproteobacteria</taxon>
        <taxon>Enterobacterales</taxon>
        <taxon>Enterobacteriaceae</taxon>
        <taxon>Escherichia</taxon>
    </lineage>
</organism>
<name>RL34_ECOLC</name>
<reference key="1">
    <citation type="submission" date="2008-02" db="EMBL/GenBank/DDBJ databases">
        <title>Complete sequence of Escherichia coli C str. ATCC 8739.</title>
        <authorList>
            <person name="Copeland A."/>
            <person name="Lucas S."/>
            <person name="Lapidus A."/>
            <person name="Glavina del Rio T."/>
            <person name="Dalin E."/>
            <person name="Tice H."/>
            <person name="Bruce D."/>
            <person name="Goodwin L."/>
            <person name="Pitluck S."/>
            <person name="Kiss H."/>
            <person name="Brettin T."/>
            <person name="Detter J.C."/>
            <person name="Han C."/>
            <person name="Kuske C.R."/>
            <person name="Schmutz J."/>
            <person name="Larimer F."/>
            <person name="Land M."/>
            <person name="Hauser L."/>
            <person name="Kyrpides N."/>
            <person name="Mikhailova N."/>
            <person name="Ingram L."/>
            <person name="Richardson P."/>
        </authorList>
    </citation>
    <scope>NUCLEOTIDE SEQUENCE [LARGE SCALE GENOMIC DNA]</scope>
    <source>
        <strain>ATCC 8739 / DSM 1576 / NBRC 3972 / NCIMB 8545 / WDCM 00012 / Crooks</strain>
    </source>
</reference>
<sequence length="46" mass="5380">MKRTFQPSVLKRNRSHGFRARMATKNGRQVLARRRAKGRARLTVSK</sequence>
<proteinExistence type="inferred from homology"/>
<keyword id="KW-0687">Ribonucleoprotein</keyword>
<keyword id="KW-0689">Ribosomal protein</keyword>
<gene>
    <name evidence="1" type="primary">rpmH</name>
    <name type="ordered locus">EcolC_4292</name>
</gene>
<accession>B1IX36</accession>
<dbReference type="EMBL" id="CP000946">
    <property type="protein sequence ID" value="ACA79888.1"/>
    <property type="molecule type" value="Genomic_DNA"/>
</dbReference>
<dbReference type="RefSeq" id="WP_000831330.1">
    <property type="nucleotide sequence ID" value="NZ_MTFT01000013.1"/>
</dbReference>
<dbReference type="SMR" id="B1IX36"/>
<dbReference type="GeneID" id="98190980"/>
<dbReference type="KEGG" id="ecl:EcolC_4292"/>
<dbReference type="HOGENOM" id="CLU_129938_2_1_6"/>
<dbReference type="GO" id="GO:1990904">
    <property type="term" value="C:ribonucleoprotein complex"/>
    <property type="evidence" value="ECO:0007669"/>
    <property type="project" value="UniProtKB-KW"/>
</dbReference>
<dbReference type="GO" id="GO:0005840">
    <property type="term" value="C:ribosome"/>
    <property type="evidence" value="ECO:0007669"/>
    <property type="project" value="UniProtKB-KW"/>
</dbReference>
<dbReference type="GO" id="GO:0003735">
    <property type="term" value="F:structural constituent of ribosome"/>
    <property type="evidence" value="ECO:0007669"/>
    <property type="project" value="InterPro"/>
</dbReference>
<dbReference type="GO" id="GO:0006412">
    <property type="term" value="P:translation"/>
    <property type="evidence" value="ECO:0007669"/>
    <property type="project" value="UniProtKB-UniRule"/>
</dbReference>
<dbReference type="FunFam" id="1.10.287.3980:FF:000001">
    <property type="entry name" value="Mitochondrial ribosomal protein L34"/>
    <property type="match status" value="1"/>
</dbReference>
<dbReference type="Gene3D" id="1.10.287.3980">
    <property type="match status" value="1"/>
</dbReference>
<dbReference type="HAMAP" id="MF_00391">
    <property type="entry name" value="Ribosomal_bL34"/>
    <property type="match status" value="1"/>
</dbReference>
<dbReference type="InterPro" id="IPR000271">
    <property type="entry name" value="Ribosomal_bL34"/>
</dbReference>
<dbReference type="InterPro" id="IPR020939">
    <property type="entry name" value="Ribosomal_bL34_CS"/>
</dbReference>
<dbReference type="NCBIfam" id="TIGR01030">
    <property type="entry name" value="rpmH_bact"/>
    <property type="match status" value="1"/>
</dbReference>
<dbReference type="PANTHER" id="PTHR14503:SF4">
    <property type="entry name" value="LARGE RIBOSOMAL SUBUNIT PROTEIN BL34M"/>
    <property type="match status" value="1"/>
</dbReference>
<dbReference type="PANTHER" id="PTHR14503">
    <property type="entry name" value="MITOCHONDRIAL RIBOSOMAL PROTEIN 34 FAMILY MEMBER"/>
    <property type="match status" value="1"/>
</dbReference>
<dbReference type="Pfam" id="PF00468">
    <property type="entry name" value="Ribosomal_L34"/>
    <property type="match status" value="1"/>
</dbReference>
<dbReference type="PROSITE" id="PS00784">
    <property type="entry name" value="RIBOSOMAL_L34"/>
    <property type="match status" value="1"/>
</dbReference>
<evidence type="ECO:0000255" key="1">
    <source>
        <dbReference type="HAMAP-Rule" id="MF_00391"/>
    </source>
</evidence>
<evidence type="ECO:0000305" key="2"/>
<feature type="chain" id="PRO_1000080250" description="Large ribosomal subunit protein bL34">
    <location>
        <begin position="1"/>
        <end position="46"/>
    </location>
</feature>
<comment type="similarity">
    <text evidence="1">Belongs to the bacterial ribosomal protein bL34 family.</text>
</comment>